<reference key="1">
    <citation type="journal article" date="2010" name="Genome Biol.">
        <title>Structure and dynamics of the pan-genome of Streptococcus pneumoniae and closely related species.</title>
        <authorList>
            <person name="Donati C."/>
            <person name="Hiller N.L."/>
            <person name="Tettelin H."/>
            <person name="Muzzi A."/>
            <person name="Croucher N.J."/>
            <person name="Angiuoli S.V."/>
            <person name="Oggioni M."/>
            <person name="Dunning Hotopp J.C."/>
            <person name="Hu F.Z."/>
            <person name="Riley D.R."/>
            <person name="Covacci A."/>
            <person name="Mitchell T.J."/>
            <person name="Bentley S.D."/>
            <person name="Kilian M."/>
            <person name="Ehrlich G.D."/>
            <person name="Rappuoli R."/>
            <person name="Moxon E.R."/>
            <person name="Masignani V."/>
        </authorList>
    </citation>
    <scope>NUCLEOTIDE SEQUENCE [LARGE SCALE GENOMIC DNA]</scope>
    <source>
        <strain>JJA</strain>
    </source>
</reference>
<feature type="chain" id="PRO_1000166745" description="Large ribosomal subunit protein bL21">
    <location>
        <begin position="1"/>
        <end position="104"/>
    </location>
</feature>
<accession>C1CE92</accession>
<keyword id="KW-0687">Ribonucleoprotein</keyword>
<keyword id="KW-0689">Ribosomal protein</keyword>
<keyword id="KW-0694">RNA-binding</keyword>
<keyword id="KW-0699">rRNA-binding</keyword>
<evidence type="ECO:0000255" key="1">
    <source>
        <dbReference type="HAMAP-Rule" id="MF_01363"/>
    </source>
</evidence>
<evidence type="ECO:0000305" key="2"/>
<name>RL21_STRZJ</name>
<protein>
    <recommendedName>
        <fullName evidence="1">Large ribosomal subunit protein bL21</fullName>
    </recommendedName>
    <alternativeName>
        <fullName evidence="2">50S ribosomal protein L21</fullName>
    </alternativeName>
</protein>
<organism>
    <name type="scientific">Streptococcus pneumoniae (strain JJA)</name>
    <dbReference type="NCBI Taxonomy" id="488222"/>
    <lineage>
        <taxon>Bacteria</taxon>
        <taxon>Bacillati</taxon>
        <taxon>Bacillota</taxon>
        <taxon>Bacilli</taxon>
        <taxon>Lactobacillales</taxon>
        <taxon>Streptococcaceae</taxon>
        <taxon>Streptococcus</taxon>
    </lineage>
</organism>
<proteinExistence type="inferred from homology"/>
<sequence>MSTYAIIKTGGKQVKVEVGQAVYVEKLNVEAGQEVTFNEVVLVGGENTVVGTPLVAGATVVGTVEKQGKQKKVVTYKYKPKKGSHRKQGHRQPYTKVVINAINA</sequence>
<gene>
    <name evidence="1" type="primary">rplU</name>
    <name type="ordered locus">SPJ_1043</name>
</gene>
<dbReference type="EMBL" id="CP000919">
    <property type="protein sequence ID" value="ACO19635.1"/>
    <property type="molecule type" value="Genomic_DNA"/>
</dbReference>
<dbReference type="RefSeq" id="WP_000109141.1">
    <property type="nucleotide sequence ID" value="NC_012466.1"/>
</dbReference>
<dbReference type="SMR" id="C1CE92"/>
<dbReference type="GeneID" id="93739805"/>
<dbReference type="KEGG" id="sjj:SPJ_1043"/>
<dbReference type="HOGENOM" id="CLU_061463_3_1_9"/>
<dbReference type="Proteomes" id="UP000002206">
    <property type="component" value="Chromosome"/>
</dbReference>
<dbReference type="GO" id="GO:0005737">
    <property type="term" value="C:cytoplasm"/>
    <property type="evidence" value="ECO:0007669"/>
    <property type="project" value="UniProtKB-ARBA"/>
</dbReference>
<dbReference type="GO" id="GO:1990904">
    <property type="term" value="C:ribonucleoprotein complex"/>
    <property type="evidence" value="ECO:0007669"/>
    <property type="project" value="UniProtKB-KW"/>
</dbReference>
<dbReference type="GO" id="GO:0005840">
    <property type="term" value="C:ribosome"/>
    <property type="evidence" value="ECO:0007669"/>
    <property type="project" value="UniProtKB-KW"/>
</dbReference>
<dbReference type="GO" id="GO:0019843">
    <property type="term" value="F:rRNA binding"/>
    <property type="evidence" value="ECO:0007669"/>
    <property type="project" value="UniProtKB-UniRule"/>
</dbReference>
<dbReference type="GO" id="GO:0003735">
    <property type="term" value="F:structural constituent of ribosome"/>
    <property type="evidence" value="ECO:0007669"/>
    <property type="project" value="InterPro"/>
</dbReference>
<dbReference type="GO" id="GO:0006412">
    <property type="term" value="P:translation"/>
    <property type="evidence" value="ECO:0007669"/>
    <property type="project" value="UniProtKB-UniRule"/>
</dbReference>
<dbReference type="HAMAP" id="MF_01363">
    <property type="entry name" value="Ribosomal_bL21"/>
    <property type="match status" value="1"/>
</dbReference>
<dbReference type="InterPro" id="IPR028909">
    <property type="entry name" value="bL21-like"/>
</dbReference>
<dbReference type="InterPro" id="IPR036164">
    <property type="entry name" value="bL21-like_sf"/>
</dbReference>
<dbReference type="InterPro" id="IPR001787">
    <property type="entry name" value="Ribosomal_bL21"/>
</dbReference>
<dbReference type="InterPro" id="IPR018258">
    <property type="entry name" value="Ribosomal_bL21_CS"/>
</dbReference>
<dbReference type="NCBIfam" id="TIGR00061">
    <property type="entry name" value="L21"/>
    <property type="match status" value="1"/>
</dbReference>
<dbReference type="PANTHER" id="PTHR21349">
    <property type="entry name" value="50S RIBOSOMAL PROTEIN L21"/>
    <property type="match status" value="1"/>
</dbReference>
<dbReference type="PANTHER" id="PTHR21349:SF0">
    <property type="entry name" value="LARGE RIBOSOMAL SUBUNIT PROTEIN BL21M"/>
    <property type="match status" value="1"/>
</dbReference>
<dbReference type="Pfam" id="PF00829">
    <property type="entry name" value="Ribosomal_L21p"/>
    <property type="match status" value="1"/>
</dbReference>
<dbReference type="SUPFAM" id="SSF141091">
    <property type="entry name" value="L21p-like"/>
    <property type="match status" value="1"/>
</dbReference>
<dbReference type="PROSITE" id="PS01169">
    <property type="entry name" value="RIBOSOMAL_L21"/>
    <property type="match status" value="1"/>
</dbReference>
<comment type="function">
    <text evidence="1">This protein binds to 23S rRNA in the presence of protein L20.</text>
</comment>
<comment type="subunit">
    <text evidence="1">Part of the 50S ribosomal subunit. Contacts protein L20.</text>
</comment>
<comment type="similarity">
    <text evidence="1">Belongs to the bacterial ribosomal protein bL21 family.</text>
</comment>